<accession>B5RDP9</accession>
<sequence length="208" mass="23192">MVSGRVQALLEQLRAQGIRDEQVLNALAAVPREKFIDEAFEHKAWENIALPIGQGQTISQPYMVARMTELLELTPQSRVLEIGTGSGYQTAILAHLVHHVCSVERIKGLQWQARRRLKQLDLHNVSTRHGDGWQGWQARAPFDAIIVTAAPPEIPTALMAQLDEGGILVLPVGDEQQFLKRVRRRGGEFIIDTVEAVRFVPLVKGELA</sequence>
<gene>
    <name evidence="1" type="primary">pcm</name>
    <name type="ordered locus">SG2829</name>
</gene>
<name>PIMT_SALG2</name>
<reference key="1">
    <citation type="journal article" date="2008" name="Genome Res.">
        <title>Comparative genome analysis of Salmonella enteritidis PT4 and Salmonella gallinarum 287/91 provides insights into evolutionary and host adaptation pathways.</title>
        <authorList>
            <person name="Thomson N.R."/>
            <person name="Clayton D.J."/>
            <person name="Windhorst D."/>
            <person name="Vernikos G."/>
            <person name="Davidson S."/>
            <person name="Churcher C."/>
            <person name="Quail M.A."/>
            <person name="Stevens M."/>
            <person name="Jones M.A."/>
            <person name="Watson M."/>
            <person name="Barron A."/>
            <person name="Layton A."/>
            <person name="Pickard D."/>
            <person name="Kingsley R.A."/>
            <person name="Bignell A."/>
            <person name="Clark L."/>
            <person name="Harris B."/>
            <person name="Ormond D."/>
            <person name="Abdellah Z."/>
            <person name="Brooks K."/>
            <person name="Cherevach I."/>
            <person name="Chillingworth T."/>
            <person name="Woodward J."/>
            <person name="Norberczak H."/>
            <person name="Lord A."/>
            <person name="Arrowsmith C."/>
            <person name="Jagels K."/>
            <person name="Moule S."/>
            <person name="Mungall K."/>
            <person name="Saunders M."/>
            <person name="Whitehead S."/>
            <person name="Chabalgoity J.A."/>
            <person name="Maskell D."/>
            <person name="Humphreys T."/>
            <person name="Roberts M."/>
            <person name="Barrow P.A."/>
            <person name="Dougan G."/>
            <person name="Parkhill J."/>
        </authorList>
    </citation>
    <scope>NUCLEOTIDE SEQUENCE [LARGE SCALE GENOMIC DNA]</scope>
    <source>
        <strain>287/91 / NCTC 13346</strain>
    </source>
</reference>
<protein>
    <recommendedName>
        <fullName evidence="1">Protein-L-isoaspartate O-methyltransferase</fullName>
        <ecNumber evidence="1">2.1.1.77</ecNumber>
    </recommendedName>
    <alternativeName>
        <fullName evidence="1">L-isoaspartyl protein carboxyl methyltransferase</fullName>
    </alternativeName>
    <alternativeName>
        <fullName evidence="1">Protein L-isoaspartyl methyltransferase</fullName>
    </alternativeName>
    <alternativeName>
        <fullName evidence="1">Protein-beta-aspartate methyltransferase</fullName>
        <shortName evidence="1">PIMT</shortName>
    </alternativeName>
</protein>
<evidence type="ECO:0000255" key="1">
    <source>
        <dbReference type="HAMAP-Rule" id="MF_00090"/>
    </source>
</evidence>
<dbReference type="EC" id="2.1.1.77" evidence="1"/>
<dbReference type="EMBL" id="AM933173">
    <property type="protein sequence ID" value="CAR38637.1"/>
    <property type="molecule type" value="Genomic_DNA"/>
</dbReference>
<dbReference type="RefSeq" id="WP_000253545.1">
    <property type="nucleotide sequence ID" value="NC_011274.1"/>
</dbReference>
<dbReference type="SMR" id="B5RDP9"/>
<dbReference type="KEGG" id="seg:SG2829"/>
<dbReference type="HOGENOM" id="CLU_055432_2_0_6"/>
<dbReference type="Proteomes" id="UP000008321">
    <property type="component" value="Chromosome"/>
</dbReference>
<dbReference type="GO" id="GO:0005737">
    <property type="term" value="C:cytoplasm"/>
    <property type="evidence" value="ECO:0007669"/>
    <property type="project" value="UniProtKB-SubCell"/>
</dbReference>
<dbReference type="GO" id="GO:0004719">
    <property type="term" value="F:protein-L-isoaspartate (D-aspartate) O-methyltransferase activity"/>
    <property type="evidence" value="ECO:0007669"/>
    <property type="project" value="UniProtKB-UniRule"/>
</dbReference>
<dbReference type="GO" id="GO:0032259">
    <property type="term" value="P:methylation"/>
    <property type="evidence" value="ECO:0007669"/>
    <property type="project" value="UniProtKB-KW"/>
</dbReference>
<dbReference type="GO" id="GO:0036211">
    <property type="term" value="P:protein modification process"/>
    <property type="evidence" value="ECO:0007669"/>
    <property type="project" value="UniProtKB-UniRule"/>
</dbReference>
<dbReference type="GO" id="GO:0030091">
    <property type="term" value="P:protein repair"/>
    <property type="evidence" value="ECO:0007669"/>
    <property type="project" value="UniProtKB-UniRule"/>
</dbReference>
<dbReference type="CDD" id="cd02440">
    <property type="entry name" value="AdoMet_MTases"/>
    <property type="match status" value="1"/>
</dbReference>
<dbReference type="FunFam" id="3.40.50.150:FF:000010">
    <property type="entry name" value="Protein-L-isoaspartate O-methyltransferase"/>
    <property type="match status" value="1"/>
</dbReference>
<dbReference type="Gene3D" id="3.40.50.150">
    <property type="entry name" value="Vaccinia Virus protein VP39"/>
    <property type="match status" value="1"/>
</dbReference>
<dbReference type="HAMAP" id="MF_00090">
    <property type="entry name" value="PIMT"/>
    <property type="match status" value="1"/>
</dbReference>
<dbReference type="InterPro" id="IPR000682">
    <property type="entry name" value="PCMT"/>
</dbReference>
<dbReference type="InterPro" id="IPR029063">
    <property type="entry name" value="SAM-dependent_MTases_sf"/>
</dbReference>
<dbReference type="NCBIfam" id="TIGR00080">
    <property type="entry name" value="pimt"/>
    <property type="match status" value="1"/>
</dbReference>
<dbReference type="NCBIfam" id="NF001453">
    <property type="entry name" value="PRK00312.1"/>
    <property type="match status" value="1"/>
</dbReference>
<dbReference type="PANTHER" id="PTHR11579">
    <property type="entry name" value="PROTEIN-L-ISOASPARTATE O-METHYLTRANSFERASE"/>
    <property type="match status" value="1"/>
</dbReference>
<dbReference type="PANTHER" id="PTHR11579:SF0">
    <property type="entry name" value="PROTEIN-L-ISOASPARTATE(D-ASPARTATE) O-METHYLTRANSFERASE"/>
    <property type="match status" value="1"/>
</dbReference>
<dbReference type="Pfam" id="PF01135">
    <property type="entry name" value="PCMT"/>
    <property type="match status" value="1"/>
</dbReference>
<dbReference type="SUPFAM" id="SSF53335">
    <property type="entry name" value="S-adenosyl-L-methionine-dependent methyltransferases"/>
    <property type="match status" value="1"/>
</dbReference>
<dbReference type="PROSITE" id="PS01279">
    <property type="entry name" value="PCMT"/>
    <property type="match status" value="1"/>
</dbReference>
<proteinExistence type="inferred from homology"/>
<comment type="function">
    <text evidence="1">Catalyzes the methyl esterification of L-isoaspartyl residues in peptides and proteins that result from spontaneous decomposition of normal L-aspartyl and L-asparaginyl residues. It plays a role in the repair and/or degradation of damaged proteins.</text>
</comment>
<comment type="catalytic activity">
    <reaction evidence="1">
        <text>[protein]-L-isoaspartate + S-adenosyl-L-methionine = [protein]-L-isoaspartate alpha-methyl ester + S-adenosyl-L-homocysteine</text>
        <dbReference type="Rhea" id="RHEA:12705"/>
        <dbReference type="Rhea" id="RHEA-COMP:12143"/>
        <dbReference type="Rhea" id="RHEA-COMP:12144"/>
        <dbReference type="ChEBI" id="CHEBI:57856"/>
        <dbReference type="ChEBI" id="CHEBI:59789"/>
        <dbReference type="ChEBI" id="CHEBI:90596"/>
        <dbReference type="ChEBI" id="CHEBI:90598"/>
        <dbReference type="EC" id="2.1.1.77"/>
    </reaction>
</comment>
<comment type="subcellular location">
    <subcellularLocation>
        <location evidence="1">Cytoplasm</location>
    </subcellularLocation>
</comment>
<comment type="similarity">
    <text evidence="1">Belongs to the methyltransferase superfamily. L-isoaspartyl/D-aspartyl protein methyltransferase family.</text>
</comment>
<organism>
    <name type="scientific">Salmonella gallinarum (strain 287/91 / NCTC 13346)</name>
    <dbReference type="NCBI Taxonomy" id="550538"/>
    <lineage>
        <taxon>Bacteria</taxon>
        <taxon>Pseudomonadati</taxon>
        <taxon>Pseudomonadota</taxon>
        <taxon>Gammaproteobacteria</taxon>
        <taxon>Enterobacterales</taxon>
        <taxon>Enterobacteriaceae</taxon>
        <taxon>Salmonella</taxon>
    </lineage>
</organism>
<feature type="chain" id="PRO_1000093274" description="Protein-L-isoaspartate O-methyltransferase">
    <location>
        <begin position="1"/>
        <end position="208"/>
    </location>
</feature>
<feature type="active site" evidence="1">
    <location>
        <position position="59"/>
    </location>
</feature>
<keyword id="KW-0963">Cytoplasm</keyword>
<keyword id="KW-0489">Methyltransferase</keyword>
<keyword id="KW-0949">S-adenosyl-L-methionine</keyword>
<keyword id="KW-0808">Transferase</keyword>